<protein>
    <recommendedName>
        <fullName>Transmembrane protein 171</fullName>
    </recommendedName>
    <alternativeName>
        <fullName>Parturition-related protein 2</fullName>
    </alternativeName>
</protein>
<sequence length="323" mass="34730">MSSVGTAEPDGDQRDRQVSKLIFFLFVFGAVLLCVGVLISIFGYQACQYKPLSHCSMVLKIAGPSCAVMGLGTVILARSRARLQLRERQRQGHQDPDQSFFCGESRQFAQCLIFGFLFLTSGMLISILGIWVPGCGSDWAQEPLNETNSGEGEPQICSFLSLQIMGPLIVLVGLCFFVVAHVKKKSNLSSSRDTSEIEGGHTHSTEPVHITVGDSVIIFPPPPPPYFAESSAAAPSPGANSLHRIENPPSYSSLFNLSRTPTPENQGAASERDREVIYTISGPGSSSESSHTGHLPLDLPPRYEEKETAPATPLGAPSESSPP</sequence>
<comment type="subcellular location">
    <subcellularLocation>
        <location evidence="3">Membrane</location>
        <topology evidence="3">Multi-pass membrane protein</topology>
    </subcellularLocation>
</comment>
<reference key="1">
    <citation type="submission" date="2002-11" db="EMBL/GenBank/DDBJ databases">
        <authorList>
            <person name="Huang Z."/>
            <person name="Myatt L."/>
            <person name="Ma R.Z."/>
        </authorList>
    </citation>
    <scope>NUCLEOTIDE SEQUENCE [MRNA]</scope>
    <source>
        <strain>Sprague-Dawley</strain>
    </source>
</reference>
<organism>
    <name type="scientific">Rattus norvegicus</name>
    <name type="common">Rat</name>
    <dbReference type="NCBI Taxonomy" id="10116"/>
    <lineage>
        <taxon>Eukaryota</taxon>
        <taxon>Metazoa</taxon>
        <taxon>Chordata</taxon>
        <taxon>Craniata</taxon>
        <taxon>Vertebrata</taxon>
        <taxon>Euteleostomi</taxon>
        <taxon>Mammalia</taxon>
        <taxon>Eutheria</taxon>
        <taxon>Euarchontoglires</taxon>
        <taxon>Glires</taxon>
        <taxon>Rodentia</taxon>
        <taxon>Myomorpha</taxon>
        <taxon>Muroidea</taxon>
        <taxon>Muridae</taxon>
        <taxon>Murinae</taxon>
        <taxon>Rattus</taxon>
    </lineage>
</organism>
<name>TM171_RAT</name>
<proteinExistence type="evidence at transcript level"/>
<evidence type="ECO:0000255" key="1"/>
<evidence type="ECO:0000256" key="2">
    <source>
        <dbReference type="SAM" id="MobiDB-lite"/>
    </source>
</evidence>
<evidence type="ECO:0000305" key="3"/>
<accession>Q6K0P5</accession>
<keyword id="KW-0472">Membrane</keyword>
<keyword id="KW-1185">Reference proteome</keyword>
<keyword id="KW-0812">Transmembrane</keyword>
<keyword id="KW-1133">Transmembrane helix</keyword>
<feature type="chain" id="PRO_0000249572" description="Transmembrane protein 171">
    <location>
        <begin position="1"/>
        <end position="323"/>
    </location>
</feature>
<feature type="transmembrane region" description="Helical" evidence="1">
    <location>
        <begin position="22"/>
        <end position="42"/>
    </location>
</feature>
<feature type="transmembrane region" description="Helical" evidence="1">
    <location>
        <begin position="57"/>
        <end position="77"/>
    </location>
</feature>
<feature type="transmembrane region" description="Helical" evidence="1">
    <location>
        <begin position="112"/>
        <end position="132"/>
    </location>
</feature>
<feature type="transmembrane region" description="Helical" evidence="1">
    <location>
        <begin position="159"/>
        <end position="179"/>
    </location>
</feature>
<feature type="region of interest" description="Disordered" evidence="2">
    <location>
        <begin position="251"/>
        <end position="323"/>
    </location>
</feature>
<feature type="compositionally biased region" description="Polar residues" evidence="2">
    <location>
        <begin position="251"/>
        <end position="268"/>
    </location>
</feature>
<feature type="compositionally biased region" description="Low complexity" evidence="2">
    <location>
        <begin position="281"/>
        <end position="290"/>
    </location>
</feature>
<gene>
    <name type="primary">Tmem171</name>
    <name type="synonym">Prp2</name>
</gene>
<dbReference type="EMBL" id="AY185507">
    <property type="protein sequence ID" value="AAO67350.1"/>
    <property type="molecule type" value="mRNA"/>
</dbReference>
<dbReference type="RefSeq" id="NP_001013925.1">
    <property type="nucleotide sequence ID" value="NM_001013903.1"/>
</dbReference>
<dbReference type="FunCoup" id="Q6K0P5">
    <property type="interactions" value="1"/>
</dbReference>
<dbReference type="STRING" id="10116.ENSRNOP00000020726"/>
<dbReference type="PhosphoSitePlus" id="Q6K0P5"/>
<dbReference type="PaxDb" id="10116-ENSRNOP00000020726"/>
<dbReference type="GeneID" id="293634"/>
<dbReference type="KEGG" id="rno:293634"/>
<dbReference type="UCSC" id="RGD:1359492">
    <property type="organism name" value="rat"/>
</dbReference>
<dbReference type="AGR" id="RGD:1359492"/>
<dbReference type="CTD" id="134285"/>
<dbReference type="RGD" id="1359492">
    <property type="gene designation" value="Tmem171"/>
</dbReference>
<dbReference type="eggNOG" id="ENOG502QRR0">
    <property type="taxonomic scope" value="Eukaryota"/>
</dbReference>
<dbReference type="InParanoid" id="Q6K0P5"/>
<dbReference type="OrthoDB" id="9940935at2759"/>
<dbReference type="PhylomeDB" id="Q6K0P5"/>
<dbReference type="PRO" id="PR:Q6K0P5"/>
<dbReference type="Proteomes" id="UP000002494">
    <property type="component" value="Unplaced"/>
</dbReference>
<dbReference type="GO" id="GO:0016020">
    <property type="term" value="C:membrane"/>
    <property type="evidence" value="ECO:0007669"/>
    <property type="project" value="UniProtKB-SubCell"/>
</dbReference>
<dbReference type="InterPro" id="IPR029173">
    <property type="entry name" value="TMEM171"/>
</dbReference>
<dbReference type="PANTHER" id="PTHR31617">
    <property type="entry name" value="TRANSMEMBRANE PROTEIN 171"/>
    <property type="match status" value="1"/>
</dbReference>
<dbReference type="PANTHER" id="PTHR31617:SF0">
    <property type="entry name" value="TRANSMEMBRANE PROTEIN 171"/>
    <property type="match status" value="1"/>
</dbReference>
<dbReference type="Pfam" id="PF15471">
    <property type="entry name" value="TMEM171"/>
    <property type="match status" value="1"/>
</dbReference>